<dbReference type="EMBL" id="AAFI02000174">
    <property type="protein sequence ID" value="EAL61955.1"/>
    <property type="molecule type" value="Genomic_DNA"/>
</dbReference>
<dbReference type="RefSeq" id="XP_635421.1">
    <property type="nucleotide sequence ID" value="XM_630329.1"/>
</dbReference>
<dbReference type="SMR" id="Q54FB6"/>
<dbReference type="FunCoup" id="Q54FB6">
    <property type="interactions" value="562"/>
</dbReference>
<dbReference type="STRING" id="44689.Q54FB6"/>
<dbReference type="PaxDb" id="44689-DDB0233175"/>
<dbReference type="EnsemblProtists" id="EAL61955">
    <property type="protein sequence ID" value="EAL61955"/>
    <property type="gene ID" value="DDB_G0291049"/>
</dbReference>
<dbReference type="GeneID" id="8627922"/>
<dbReference type="KEGG" id="ddi:DDB_G0291049"/>
<dbReference type="dictyBase" id="DDB_G0291049">
    <property type="gene designation" value="ost2"/>
</dbReference>
<dbReference type="VEuPathDB" id="AmoebaDB:DDB_G0291049"/>
<dbReference type="eggNOG" id="KOG1746">
    <property type="taxonomic scope" value="Eukaryota"/>
</dbReference>
<dbReference type="HOGENOM" id="CLU_111220_2_1_1"/>
<dbReference type="InParanoid" id="Q54FB6"/>
<dbReference type="OMA" id="HIILHIV"/>
<dbReference type="PhylomeDB" id="Q54FB6"/>
<dbReference type="UniPathway" id="UPA00378"/>
<dbReference type="PRO" id="PR:Q54FB6"/>
<dbReference type="Proteomes" id="UP000002195">
    <property type="component" value="Chromosome 5"/>
</dbReference>
<dbReference type="GO" id="GO:0008250">
    <property type="term" value="C:oligosaccharyltransferase complex"/>
    <property type="evidence" value="ECO:0000250"/>
    <property type="project" value="dictyBase"/>
</dbReference>
<dbReference type="GO" id="GO:0006487">
    <property type="term" value="P:protein N-linked glycosylation"/>
    <property type="evidence" value="ECO:0000250"/>
    <property type="project" value="dictyBase"/>
</dbReference>
<dbReference type="InterPro" id="IPR003038">
    <property type="entry name" value="DAD/Ost2"/>
</dbReference>
<dbReference type="PANTHER" id="PTHR10705">
    <property type="entry name" value="DOLICHYL-DIPHOSPHOOLIGOSACCHARIDE--PROTEIN GLYCOSYLTRANSFERASE SUBUNIT DAD1"/>
    <property type="match status" value="1"/>
</dbReference>
<dbReference type="PANTHER" id="PTHR10705:SF0">
    <property type="entry name" value="DOLICHYL-DIPHOSPHOOLIGOSACCHARIDE--PROTEIN GLYCOSYLTRANSFERASE SUBUNIT DAD1"/>
    <property type="match status" value="1"/>
</dbReference>
<dbReference type="Pfam" id="PF02109">
    <property type="entry name" value="DAD"/>
    <property type="match status" value="1"/>
</dbReference>
<dbReference type="PIRSF" id="PIRSF005588">
    <property type="entry name" value="DAD"/>
    <property type="match status" value="1"/>
</dbReference>
<name>DAD1_DICDI</name>
<reference key="1">
    <citation type="journal article" date="2005" name="Nature">
        <title>The genome of the social amoeba Dictyostelium discoideum.</title>
        <authorList>
            <person name="Eichinger L."/>
            <person name="Pachebat J.A."/>
            <person name="Gloeckner G."/>
            <person name="Rajandream M.A."/>
            <person name="Sucgang R."/>
            <person name="Berriman M."/>
            <person name="Song J."/>
            <person name="Olsen R."/>
            <person name="Szafranski K."/>
            <person name="Xu Q."/>
            <person name="Tunggal B."/>
            <person name="Kummerfeld S."/>
            <person name="Madera M."/>
            <person name="Konfortov B.A."/>
            <person name="Rivero F."/>
            <person name="Bankier A.T."/>
            <person name="Lehmann R."/>
            <person name="Hamlin N."/>
            <person name="Davies R."/>
            <person name="Gaudet P."/>
            <person name="Fey P."/>
            <person name="Pilcher K."/>
            <person name="Chen G."/>
            <person name="Saunders D."/>
            <person name="Sodergren E.J."/>
            <person name="Davis P."/>
            <person name="Kerhornou A."/>
            <person name="Nie X."/>
            <person name="Hall N."/>
            <person name="Anjard C."/>
            <person name="Hemphill L."/>
            <person name="Bason N."/>
            <person name="Farbrother P."/>
            <person name="Desany B."/>
            <person name="Just E."/>
            <person name="Morio T."/>
            <person name="Rost R."/>
            <person name="Churcher C.M."/>
            <person name="Cooper J."/>
            <person name="Haydock S."/>
            <person name="van Driessche N."/>
            <person name="Cronin A."/>
            <person name="Goodhead I."/>
            <person name="Muzny D.M."/>
            <person name="Mourier T."/>
            <person name="Pain A."/>
            <person name="Lu M."/>
            <person name="Harper D."/>
            <person name="Lindsay R."/>
            <person name="Hauser H."/>
            <person name="James K.D."/>
            <person name="Quiles M."/>
            <person name="Madan Babu M."/>
            <person name="Saito T."/>
            <person name="Buchrieser C."/>
            <person name="Wardroper A."/>
            <person name="Felder M."/>
            <person name="Thangavelu M."/>
            <person name="Johnson D."/>
            <person name="Knights A."/>
            <person name="Loulseged H."/>
            <person name="Mungall K.L."/>
            <person name="Oliver K."/>
            <person name="Price C."/>
            <person name="Quail M.A."/>
            <person name="Urushihara H."/>
            <person name="Hernandez J."/>
            <person name="Rabbinowitsch E."/>
            <person name="Steffen D."/>
            <person name="Sanders M."/>
            <person name="Ma J."/>
            <person name="Kohara Y."/>
            <person name="Sharp S."/>
            <person name="Simmonds M.N."/>
            <person name="Spiegler S."/>
            <person name="Tivey A."/>
            <person name="Sugano S."/>
            <person name="White B."/>
            <person name="Walker D."/>
            <person name="Woodward J.R."/>
            <person name="Winckler T."/>
            <person name="Tanaka Y."/>
            <person name="Shaulsky G."/>
            <person name="Schleicher M."/>
            <person name="Weinstock G.M."/>
            <person name="Rosenthal A."/>
            <person name="Cox E.C."/>
            <person name="Chisholm R.L."/>
            <person name="Gibbs R.A."/>
            <person name="Loomis W.F."/>
            <person name="Platzer M."/>
            <person name="Kay R.R."/>
            <person name="Williams J.G."/>
            <person name="Dear P.H."/>
            <person name="Noegel A.A."/>
            <person name="Barrell B.G."/>
            <person name="Kuspa A."/>
        </authorList>
    </citation>
    <scope>NUCLEOTIDE SEQUENCE [LARGE SCALE GENOMIC DNA]</scope>
    <source>
        <strain>AX4</strain>
    </source>
</reference>
<organism>
    <name type="scientific">Dictyostelium discoideum</name>
    <name type="common">Social amoeba</name>
    <dbReference type="NCBI Taxonomy" id="44689"/>
    <lineage>
        <taxon>Eukaryota</taxon>
        <taxon>Amoebozoa</taxon>
        <taxon>Evosea</taxon>
        <taxon>Eumycetozoa</taxon>
        <taxon>Dictyostelia</taxon>
        <taxon>Dictyosteliales</taxon>
        <taxon>Dictyosteliaceae</taxon>
        <taxon>Dictyostelium</taxon>
    </lineage>
</organism>
<sequence length="120" mass="13471">MSTTASTSSNNLTFTSIVKSFFESYSKTPQKLKIIDLFLIYTFITGVIVFTYCCLVGTYPFNSFLAAFISTVGCFVLTVCLRIQINPINNFGKTISIERAFTDYLLCNLILHLVVFNFLG</sequence>
<gene>
    <name type="primary">ost2</name>
    <name type="ORF">DDB_G0291049</name>
</gene>
<accession>Q54FB6</accession>
<proteinExistence type="inferred from homology"/>
<feature type="chain" id="PRO_0000327672" description="Dolichyl-diphosphooligosaccharide--protein glycosyltransferase subunit 2">
    <location>
        <begin position="1"/>
        <end position="120"/>
    </location>
</feature>
<feature type="topological domain" description="Cytoplasmic" evidence="3">
    <location>
        <begin position="1"/>
        <end position="36"/>
    </location>
</feature>
<feature type="transmembrane region" description="Helical" evidence="3">
    <location>
        <begin position="37"/>
        <end position="57"/>
    </location>
</feature>
<feature type="topological domain" description="Lumenal" evidence="3">
    <location>
        <begin position="58"/>
        <end position="60"/>
    </location>
</feature>
<feature type="transmembrane region" description="Helical" evidence="3">
    <location>
        <begin position="61"/>
        <end position="81"/>
    </location>
</feature>
<feature type="topological domain" description="Cytoplasmic" evidence="3">
    <location>
        <begin position="82"/>
        <end position="99"/>
    </location>
</feature>
<feature type="transmembrane region" description="Helical" evidence="3">
    <location>
        <begin position="100"/>
        <end position="120"/>
    </location>
</feature>
<comment type="function">
    <text evidence="2">Subunit of the oligosaccharyl transferase (OST) complex that catalyzes the initial transfer of a defined glycan (Glc(3)Man(9)GlcNAc(2) in eukaryotes) from the lipid carrier dolichol-pyrophosphate to an asparagine residue within an Asn-X-Ser/Thr consensus motif in nascent polypeptide chains, the first step in protein N-glycosylation. N-glycosylation occurs cotranslationally and the complex associates with the Sec61 complex at the channel-forming translocon complex that mediates protein translocation across the endoplasmic reticulum (ER). All subunits are required for a maximal enzyme activity.</text>
</comment>
<comment type="pathway">
    <text>Protein modification; protein glycosylation.</text>
</comment>
<comment type="subunit">
    <text evidence="2">Component of the oligosaccharyltransferase (OST) complex.</text>
</comment>
<comment type="subcellular location">
    <subcellularLocation>
        <location evidence="1">Endoplasmic reticulum membrane</location>
        <topology evidence="1">Multi-pass membrane protein</topology>
    </subcellularLocation>
</comment>
<comment type="similarity">
    <text evidence="4">Belongs to the DAD/OST2 family.</text>
</comment>
<evidence type="ECO:0000250" key="1"/>
<evidence type="ECO:0000250" key="2">
    <source>
        <dbReference type="UniProtKB" id="P46964"/>
    </source>
</evidence>
<evidence type="ECO:0000255" key="3"/>
<evidence type="ECO:0000305" key="4"/>
<protein>
    <recommendedName>
        <fullName>Dolichyl-diphosphooligosaccharide--protein glycosyltransferase subunit 2</fullName>
        <shortName>Oligosaccharyl transferase subunit 2</shortName>
    </recommendedName>
</protein>
<keyword id="KW-0256">Endoplasmic reticulum</keyword>
<keyword id="KW-0472">Membrane</keyword>
<keyword id="KW-1185">Reference proteome</keyword>
<keyword id="KW-0812">Transmembrane</keyword>
<keyword id="KW-1133">Transmembrane helix</keyword>